<evidence type="ECO:0000250" key="1"/>
<evidence type="ECO:0000305" key="2"/>
<name>INS_ONCKI</name>
<feature type="peptide" id="PRO_0000015863" description="Insulin B chain">
    <location>
        <begin position="1"/>
        <end position="29"/>
    </location>
</feature>
<feature type="peptide" id="PRO_0000015864" description="Insulin A chain">
    <location>
        <begin position="30"/>
        <end position="50"/>
    </location>
</feature>
<feature type="disulfide bond" description="Interchain (between B and A chains)" evidence="1">
    <location>
        <begin position="7"/>
        <end position="36"/>
    </location>
</feature>
<feature type="disulfide bond" description="Interchain (between B and A chains)" evidence="1">
    <location>
        <begin position="19"/>
        <end position="49"/>
    </location>
</feature>
<feature type="disulfide bond" evidence="1">
    <location>
        <begin position="35"/>
        <end position="40"/>
    </location>
</feature>
<feature type="non-consecutive residues" evidence="2">
    <location>
        <begin position="29"/>
        <end position="30"/>
    </location>
</feature>
<gene>
    <name type="primary">ins</name>
</gene>
<dbReference type="PIR" id="A60322">
    <property type="entry name" value="INONC"/>
</dbReference>
<dbReference type="SMR" id="P68990"/>
<dbReference type="Proteomes" id="UP000694557">
    <property type="component" value="Unplaced"/>
</dbReference>
<dbReference type="GO" id="GO:0005615">
    <property type="term" value="C:extracellular space"/>
    <property type="evidence" value="ECO:0007669"/>
    <property type="project" value="TreeGrafter"/>
</dbReference>
<dbReference type="GO" id="GO:0005179">
    <property type="term" value="F:hormone activity"/>
    <property type="evidence" value="ECO:0007669"/>
    <property type="project" value="UniProtKB-KW"/>
</dbReference>
<dbReference type="GO" id="GO:0006006">
    <property type="term" value="P:glucose metabolic process"/>
    <property type="evidence" value="ECO:0007669"/>
    <property type="project" value="UniProtKB-KW"/>
</dbReference>
<dbReference type="CDD" id="cd04367">
    <property type="entry name" value="IlGF_insulin_like"/>
    <property type="match status" value="1"/>
</dbReference>
<dbReference type="Gene3D" id="1.10.100.10">
    <property type="entry name" value="Insulin-like"/>
    <property type="match status" value="1"/>
</dbReference>
<dbReference type="InterPro" id="IPR004825">
    <property type="entry name" value="Insulin"/>
</dbReference>
<dbReference type="InterPro" id="IPR016179">
    <property type="entry name" value="Insulin-like"/>
</dbReference>
<dbReference type="InterPro" id="IPR036438">
    <property type="entry name" value="Insulin-like_sf"/>
</dbReference>
<dbReference type="InterPro" id="IPR022353">
    <property type="entry name" value="Insulin_CS"/>
</dbReference>
<dbReference type="InterPro" id="IPR022352">
    <property type="entry name" value="Insulin_family"/>
</dbReference>
<dbReference type="PANTHER" id="PTHR11454:SF9">
    <property type="entry name" value="INSULIN"/>
    <property type="match status" value="1"/>
</dbReference>
<dbReference type="PANTHER" id="PTHR11454">
    <property type="entry name" value="INSULIN/INSULIN GROWTH FACTOR"/>
    <property type="match status" value="1"/>
</dbReference>
<dbReference type="Pfam" id="PF00049">
    <property type="entry name" value="Insulin"/>
    <property type="match status" value="2"/>
</dbReference>
<dbReference type="PRINTS" id="PR00277">
    <property type="entry name" value="INSULIN"/>
</dbReference>
<dbReference type="PRINTS" id="PR00276">
    <property type="entry name" value="INSULINFAMLY"/>
</dbReference>
<dbReference type="SMART" id="SM00078">
    <property type="entry name" value="IlGF"/>
    <property type="match status" value="1"/>
</dbReference>
<dbReference type="SUPFAM" id="SSF56994">
    <property type="entry name" value="Insulin-like"/>
    <property type="match status" value="1"/>
</dbReference>
<dbReference type="PROSITE" id="PS00262">
    <property type="entry name" value="INSULIN"/>
    <property type="match status" value="1"/>
</dbReference>
<protein>
    <recommendedName>
        <fullName>Insulin</fullName>
    </recommendedName>
    <component>
        <recommendedName>
            <fullName>Insulin B chain</fullName>
        </recommendedName>
    </component>
    <component>
        <recommendedName>
            <fullName>Insulin A chain</fullName>
        </recommendedName>
    </component>
</protein>
<organism>
    <name type="scientific">Oncorhynchus kisutch</name>
    <name type="common">Coho salmon</name>
    <name type="synonym">Salmo kisutch</name>
    <dbReference type="NCBI Taxonomy" id="8019"/>
    <lineage>
        <taxon>Eukaryota</taxon>
        <taxon>Metazoa</taxon>
        <taxon>Chordata</taxon>
        <taxon>Craniata</taxon>
        <taxon>Vertebrata</taxon>
        <taxon>Euteleostomi</taxon>
        <taxon>Actinopterygii</taxon>
        <taxon>Neopterygii</taxon>
        <taxon>Teleostei</taxon>
        <taxon>Protacanthopterygii</taxon>
        <taxon>Salmoniformes</taxon>
        <taxon>Salmonidae</taxon>
        <taxon>Salmoninae</taxon>
        <taxon>Oncorhynchus</taxon>
    </lineage>
</organism>
<reference key="1">
    <citation type="journal article" date="1985" name="Regul. Pept.">
        <title>Characterization of coho salmon (Oncorhynchus kisutch) insulin.</title>
        <authorList>
            <person name="Plisetskaya E."/>
            <person name="Pollock H.G."/>
            <person name="Rouse J.B."/>
            <person name="Hamilton J.W."/>
            <person name="Kimmel J.R."/>
            <person name="Gorbman A."/>
        </authorList>
    </citation>
    <scope>PROTEIN SEQUENCE</scope>
</reference>
<keyword id="KW-0119">Carbohydrate metabolism</keyword>
<keyword id="KW-0903">Direct protein sequencing</keyword>
<keyword id="KW-1015">Disulfide bond</keyword>
<keyword id="KW-0313">Glucose metabolism</keyword>
<keyword id="KW-0372">Hormone</keyword>
<keyword id="KW-1185">Reference proteome</keyword>
<keyword id="KW-0964">Secreted</keyword>
<sequence length="50" mass="5576">AAAQHLCGSHLVDALYLVCGEKGFFYNPKGIVEQCCHKPCNIFDLQNYCN</sequence>
<proteinExistence type="evidence at protein level"/>
<comment type="function">
    <text>Insulin decreases blood glucose concentration. It increases cell permeability to monosaccharides, amino acids and fatty acids. It accelerates glycolysis, the pentose phosphate cycle, and glycogen synthesis in liver.</text>
</comment>
<comment type="subunit">
    <text>Heterodimer of a B chain and an A chain linked by two disulfide bonds.</text>
</comment>
<comment type="subcellular location">
    <subcellularLocation>
        <location>Secreted</location>
    </subcellularLocation>
</comment>
<comment type="similarity">
    <text evidence="2">Belongs to the insulin family.</text>
</comment>
<accession>P68990</accession>
<accession>P23187</accession>